<name>HGD_BURO1</name>
<keyword id="KW-0223">Dioxygenase</keyword>
<keyword id="KW-0408">Iron</keyword>
<keyword id="KW-0479">Metal-binding</keyword>
<keyword id="KW-0560">Oxidoreductase</keyword>
<keyword id="KW-0585">Phenylalanine catabolism</keyword>
<keyword id="KW-0828">Tyrosine catabolism</keyword>
<organism>
    <name type="scientific">Burkholderia orbicola (strain AU 1054)</name>
    <dbReference type="NCBI Taxonomy" id="331271"/>
    <lineage>
        <taxon>Bacteria</taxon>
        <taxon>Pseudomonadati</taxon>
        <taxon>Pseudomonadota</taxon>
        <taxon>Betaproteobacteria</taxon>
        <taxon>Burkholderiales</taxon>
        <taxon>Burkholderiaceae</taxon>
        <taxon>Burkholderia</taxon>
        <taxon>Burkholderia cepacia complex</taxon>
        <taxon>Burkholderia orbicola</taxon>
    </lineage>
</organism>
<comment type="function">
    <text evidence="1">Involved in the catabolism of homogentisate (2,5-dihydroxyphenylacetate or 2,5-OH-PhAc), a central intermediate in the degradation of phenylalanine and tyrosine. Catalyzes the oxidative ring cleavage of the aromatic ring of homogentisate to yield maleylacetoacetate.</text>
</comment>
<comment type="catalytic activity">
    <reaction evidence="1">
        <text>homogentisate + O2 = 4-maleylacetoacetate + H(+)</text>
        <dbReference type="Rhea" id="RHEA:15449"/>
        <dbReference type="ChEBI" id="CHEBI:15378"/>
        <dbReference type="ChEBI" id="CHEBI:15379"/>
        <dbReference type="ChEBI" id="CHEBI:16169"/>
        <dbReference type="ChEBI" id="CHEBI:17105"/>
        <dbReference type="EC" id="1.13.11.5"/>
    </reaction>
</comment>
<comment type="cofactor">
    <cofactor evidence="1">
        <name>Fe cation</name>
        <dbReference type="ChEBI" id="CHEBI:24875"/>
    </cofactor>
</comment>
<comment type="pathway">
    <text evidence="1">Amino-acid degradation; L-phenylalanine degradation; acetoacetate and fumarate from L-phenylalanine: step 4/6.</text>
</comment>
<comment type="subunit">
    <text evidence="1">Hexamer; dimer of trimers.</text>
</comment>
<comment type="similarity">
    <text evidence="1">Belongs to the homogentisate dioxygenase family.</text>
</comment>
<evidence type="ECO:0000255" key="1">
    <source>
        <dbReference type="HAMAP-Rule" id="MF_00334"/>
    </source>
</evidence>
<reference key="1">
    <citation type="submission" date="2006-05" db="EMBL/GenBank/DDBJ databases">
        <title>Complete sequence of chromosome 1 of Burkholderia cenocepacia AU 1054.</title>
        <authorList>
            <consortium name="US DOE Joint Genome Institute"/>
            <person name="Copeland A."/>
            <person name="Lucas S."/>
            <person name="Lapidus A."/>
            <person name="Barry K."/>
            <person name="Detter J.C."/>
            <person name="Glavina del Rio T."/>
            <person name="Hammon N."/>
            <person name="Israni S."/>
            <person name="Dalin E."/>
            <person name="Tice H."/>
            <person name="Pitluck S."/>
            <person name="Chain P."/>
            <person name="Malfatti S."/>
            <person name="Shin M."/>
            <person name="Vergez L."/>
            <person name="Schmutz J."/>
            <person name="Larimer F."/>
            <person name="Land M."/>
            <person name="Hauser L."/>
            <person name="Kyrpides N."/>
            <person name="Lykidis A."/>
            <person name="LiPuma J.J."/>
            <person name="Konstantinidis K."/>
            <person name="Tiedje J.M."/>
            <person name="Richardson P."/>
        </authorList>
    </citation>
    <scope>NUCLEOTIDE SEQUENCE [LARGE SCALE GENOMIC DNA]</scope>
    <source>
        <strain>AU 1054</strain>
    </source>
</reference>
<gene>
    <name evidence="1" type="primary">hmgA</name>
    <name type="ordered locus">Bcen_0337</name>
</gene>
<proteinExistence type="inferred from homology"/>
<dbReference type="EC" id="1.13.11.5" evidence="1"/>
<dbReference type="EMBL" id="CP000378">
    <property type="protein sequence ID" value="ABF75249.1"/>
    <property type="molecule type" value="Genomic_DNA"/>
</dbReference>
<dbReference type="SMR" id="Q1BYQ6"/>
<dbReference type="HOGENOM" id="CLU_027174_0_0_4"/>
<dbReference type="UniPathway" id="UPA00139">
    <property type="reaction ID" value="UER00339"/>
</dbReference>
<dbReference type="GO" id="GO:0005737">
    <property type="term" value="C:cytoplasm"/>
    <property type="evidence" value="ECO:0007669"/>
    <property type="project" value="TreeGrafter"/>
</dbReference>
<dbReference type="GO" id="GO:0004411">
    <property type="term" value="F:homogentisate 1,2-dioxygenase activity"/>
    <property type="evidence" value="ECO:0007669"/>
    <property type="project" value="UniProtKB-UniRule"/>
</dbReference>
<dbReference type="GO" id="GO:0005506">
    <property type="term" value="F:iron ion binding"/>
    <property type="evidence" value="ECO:0007669"/>
    <property type="project" value="UniProtKB-UniRule"/>
</dbReference>
<dbReference type="GO" id="GO:0006559">
    <property type="term" value="P:L-phenylalanine catabolic process"/>
    <property type="evidence" value="ECO:0007669"/>
    <property type="project" value="UniProtKB-UniRule"/>
</dbReference>
<dbReference type="GO" id="GO:0006572">
    <property type="term" value="P:tyrosine catabolic process"/>
    <property type="evidence" value="ECO:0007669"/>
    <property type="project" value="UniProtKB-UniRule"/>
</dbReference>
<dbReference type="CDD" id="cd07000">
    <property type="entry name" value="cupin_HGO_N"/>
    <property type="match status" value="1"/>
</dbReference>
<dbReference type="FunFam" id="2.60.120.10:FF:000034">
    <property type="entry name" value="Homogentisate 1,2-dioxygenase"/>
    <property type="match status" value="1"/>
</dbReference>
<dbReference type="Gene3D" id="2.60.120.10">
    <property type="entry name" value="Jelly Rolls"/>
    <property type="match status" value="1"/>
</dbReference>
<dbReference type="HAMAP" id="MF_00334">
    <property type="entry name" value="Homogentis_dioxygen"/>
    <property type="match status" value="1"/>
</dbReference>
<dbReference type="InterPro" id="IPR046451">
    <property type="entry name" value="HgmA_C"/>
</dbReference>
<dbReference type="InterPro" id="IPR046452">
    <property type="entry name" value="HgmA_N"/>
</dbReference>
<dbReference type="InterPro" id="IPR005708">
    <property type="entry name" value="Homogentis_dOase"/>
</dbReference>
<dbReference type="InterPro" id="IPR022950">
    <property type="entry name" value="Homogentis_dOase_bac"/>
</dbReference>
<dbReference type="InterPro" id="IPR014710">
    <property type="entry name" value="RmlC-like_jellyroll"/>
</dbReference>
<dbReference type="InterPro" id="IPR011051">
    <property type="entry name" value="RmlC_Cupin_sf"/>
</dbReference>
<dbReference type="NCBIfam" id="TIGR01015">
    <property type="entry name" value="hmgA"/>
    <property type="match status" value="1"/>
</dbReference>
<dbReference type="PANTHER" id="PTHR11056">
    <property type="entry name" value="HOMOGENTISATE 1,2-DIOXYGENASE"/>
    <property type="match status" value="1"/>
</dbReference>
<dbReference type="PANTHER" id="PTHR11056:SF0">
    <property type="entry name" value="HOMOGENTISATE 1,2-DIOXYGENASE"/>
    <property type="match status" value="1"/>
</dbReference>
<dbReference type="Pfam" id="PF04209">
    <property type="entry name" value="HgmA_C"/>
    <property type="match status" value="1"/>
</dbReference>
<dbReference type="Pfam" id="PF20510">
    <property type="entry name" value="HgmA_N"/>
    <property type="match status" value="1"/>
</dbReference>
<dbReference type="SUPFAM" id="SSF51182">
    <property type="entry name" value="RmlC-like cupins"/>
    <property type="match status" value="1"/>
</dbReference>
<protein>
    <recommendedName>
        <fullName evidence="1">Homogentisate 1,2-dioxygenase</fullName>
        <shortName evidence="1">HGDO</shortName>
        <ecNumber evidence="1">1.13.11.5</ecNumber>
    </recommendedName>
    <alternativeName>
        <fullName evidence="1">Homogentisate oxygenase</fullName>
    </alternativeName>
    <alternativeName>
        <fullName evidence="1">Homogentisic acid oxidase</fullName>
    </alternativeName>
    <alternativeName>
        <fullName evidence="1">Homogentisicase</fullName>
    </alternativeName>
</protein>
<feature type="chain" id="PRO_1000019521" description="Homogentisate 1,2-dioxygenase">
    <location>
        <begin position="1"/>
        <end position="444"/>
    </location>
</feature>
<feature type="active site" description="Proton acceptor" evidence="1">
    <location>
        <position position="298"/>
    </location>
</feature>
<feature type="binding site" evidence="1">
    <location>
        <position position="341"/>
    </location>
    <ligand>
        <name>Fe cation</name>
        <dbReference type="ChEBI" id="CHEBI:24875"/>
    </ligand>
</feature>
<feature type="binding site" evidence="1">
    <location>
        <position position="347"/>
    </location>
    <ligand>
        <name>Fe cation</name>
        <dbReference type="ChEBI" id="CHEBI:24875"/>
    </ligand>
</feature>
<feature type="binding site" evidence="1">
    <location>
        <position position="356"/>
    </location>
    <ligand>
        <name>homogentisate</name>
        <dbReference type="ChEBI" id="CHEBI:16169"/>
    </ligand>
</feature>
<feature type="binding site" evidence="1">
    <location>
        <position position="377"/>
    </location>
    <ligand>
        <name>Fe cation</name>
        <dbReference type="ChEBI" id="CHEBI:24875"/>
    </ligand>
</feature>
<feature type="binding site" evidence="1">
    <location>
        <position position="377"/>
    </location>
    <ligand>
        <name>homogentisate</name>
        <dbReference type="ChEBI" id="CHEBI:16169"/>
    </ligand>
</feature>
<accession>Q1BYQ6</accession>
<sequence length="444" mass="48960">MTLDLSKPATAGYLSGFANEFATEALPGALPHGRNSPQRAPYGLYAEQLSGTAFTAPRGHNRRSWLYRIRPAAVHRPFEPYAGAQRLVSEFGDSADVPPTPPNQLRWDPLPMPVEPTDFVDGLVTMAGNGSAAAMNGCAIHLYAANRSMQDRFFYSADGELLIVPQQGRLFIATEFGRLDVEPFEIAVIPRGVRFAVALPDGNARGYICENFGALLRLPDLGPIGSNGLANPRDFLTPQAAYEDREGAFELIAKLNGRLWRADIGHSPLDVVAWHGNYAPYKYDLRLFNTIGSISFDHPDPSIFLVLQAQSDTPGVDTIDFVIFPPRWLAAEDTFRPPWFHRNVASEFMGLVHGAYDAKAEGFVPGGASLHNCMSGHGPDADTFEKASASDTTKPHKVDATMAFMFETRTLIRPTRYALDTAQLQADYFECWQGIKKHFNPEQR</sequence>